<comment type="function">
    <text>The proteasome is a multicatalytic proteinase complex which is characterized by its ability to cleave peptides with Arg, Phe, Tyr, Leu, and Glu adjacent to the leaving group at neutral or slightly basic pH. The proteasome has an ATP-dependent proteolytic activity.</text>
</comment>
<comment type="catalytic activity">
    <reaction>
        <text>Cleavage of peptide bonds with very broad specificity.</text>
        <dbReference type="EC" id="3.4.25.1"/>
    </reaction>
</comment>
<comment type="subunit">
    <text>The 26S proteasome consists of a 20S proteasome core and two 19S regulatory subunits. The 20S proteasome core is composed of 28 subunits that are arranged in four stacked rings, resulting in a barrel-shaped structure. The two end rings are each formed by seven alpha subunits, and the two central rings are each formed by seven beta subunits. The catalytic chamber with the active sites is on the inside of the barrel.</text>
</comment>
<comment type="subcellular location">
    <subcellularLocation>
        <location evidence="3">Cytoplasm</location>
    </subcellularLocation>
    <subcellularLocation>
        <location evidence="1">Nucleus</location>
    </subcellularLocation>
</comment>
<comment type="similarity">
    <text evidence="3">Belongs to the peptidase T1B family.</text>
</comment>
<protein>
    <recommendedName>
        <fullName>Proteasome subunit beta type-5</fullName>
        <ecNumber>3.4.25.1</ecNumber>
    </recommendedName>
    <alternativeName>
        <fullName>20S proteasome subunit E</fullName>
    </alternativeName>
    <alternativeName>
        <fullName>Proteasome epsilon chain</fullName>
    </alternativeName>
</protein>
<evidence type="ECO:0000250" key="1"/>
<evidence type="ECO:0000255" key="2"/>
<evidence type="ECO:0000255" key="3">
    <source>
        <dbReference type="PROSITE-ProRule" id="PRU00809"/>
    </source>
</evidence>
<evidence type="ECO:0007829" key="4">
    <source>
        <dbReference type="PDB" id="7QVE"/>
    </source>
</evidence>
<proteinExistence type="evidence at protein level"/>
<keyword id="KW-0002">3D-structure</keyword>
<keyword id="KW-0963">Cytoplasm</keyword>
<keyword id="KW-0378">Hydrolase</keyword>
<keyword id="KW-0539">Nucleus</keyword>
<keyword id="KW-0645">Protease</keyword>
<keyword id="KW-0647">Proteasome</keyword>
<keyword id="KW-1185">Reference proteome</keyword>
<keyword id="KW-0888">Threonine protease</keyword>
<keyword id="KW-0865">Zymogen</keyword>
<reference key="1">
    <citation type="journal article" date="1997" name="Plant Mol. Biol.">
        <title>Characterization of 26S proteasome alpha- and beta-type and ATPase subunits from spinach and their expression during early stages of seedling development.</title>
        <authorList>
            <person name="Ito N."/>
            <person name="Tomizawa K."/>
            <person name="Tanaka K."/>
            <person name="Matsui M."/>
            <person name="Kendrick R.E."/>
            <person name="Sato T."/>
            <person name="Nakagawa H."/>
        </authorList>
    </citation>
    <scope>NUCLEOTIDE SEQUENCE [MRNA]</scope>
</reference>
<dbReference type="EC" id="3.4.25.1"/>
<dbReference type="EMBL" id="D78172">
    <property type="protein sequence ID" value="BAA21650.1"/>
    <property type="molecule type" value="mRNA"/>
</dbReference>
<dbReference type="PIR" id="T09132">
    <property type="entry name" value="T09132"/>
</dbReference>
<dbReference type="RefSeq" id="NP_001413363.1">
    <property type="nucleotide sequence ID" value="NM_001426434.1"/>
</dbReference>
<dbReference type="PDB" id="7QVE">
    <property type="method" value="EM"/>
    <property type="resolution" value="3.30 A"/>
    <property type="chains" value="e/s=1-272"/>
</dbReference>
<dbReference type="PDBsum" id="7QVE"/>
<dbReference type="EMDB" id="EMD-14175"/>
<dbReference type="SMR" id="O24361"/>
<dbReference type="MEROPS" id="T01.A10"/>
<dbReference type="GeneID" id="110794192"/>
<dbReference type="OrthoDB" id="37597at2759"/>
<dbReference type="Proteomes" id="UP001155700">
    <property type="component" value="Unplaced"/>
</dbReference>
<dbReference type="GO" id="GO:0005829">
    <property type="term" value="C:cytosol"/>
    <property type="evidence" value="ECO:0000318"/>
    <property type="project" value="GO_Central"/>
</dbReference>
<dbReference type="GO" id="GO:0005634">
    <property type="term" value="C:nucleus"/>
    <property type="evidence" value="ECO:0000318"/>
    <property type="project" value="GO_Central"/>
</dbReference>
<dbReference type="GO" id="GO:0019774">
    <property type="term" value="C:proteasome core complex, beta-subunit complex"/>
    <property type="evidence" value="ECO:0000250"/>
    <property type="project" value="UniProtKB"/>
</dbReference>
<dbReference type="GO" id="GO:0004175">
    <property type="term" value="F:endopeptidase activity"/>
    <property type="evidence" value="ECO:0000318"/>
    <property type="project" value="GO_Central"/>
</dbReference>
<dbReference type="GO" id="GO:0004298">
    <property type="term" value="F:threonine-type endopeptidase activity"/>
    <property type="evidence" value="ECO:0007669"/>
    <property type="project" value="UniProtKB-KW"/>
</dbReference>
<dbReference type="GO" id="GO:0043161">
    <property type="term" value="P:proteasome-mediated ubiquitin-dependent protein catabolic process"/>
    <property type="evidence" value="ECO:0000318"/>
    <property type="project" value="GO_Central"/>
</dbReference>
<dbReference type="CDD" id="cd03761">
    <property type="entry name" value="proteasome_beta_type_5"/>
    <property type="match status" value="1"/>
</dbReference>
<dbReference type="FunFam" id="3.60.20.10:FF:000034">
    <property type="entry name" value="Proteasome subunit beta"/>
    <property type="match status" value="1"/>
</dbReference>
<dbReference type="Gene3D" id="3.60.20.10">
    <property type="entry name" value="Glutamine Phosphoribosylpyrophosphate, subunit 1, domain 1"/>
    <property type="match status" value="1"/>
</dbReference>
<dbReference type="InterPro" id="IPR029055">
    <property type="entry name" value="Ntn_hydrolases_N"/>
</dbReference>
<dbReference type="InterPro" id="IPR000243">
    <property type="entry name" value="Pept_T1A_subB"/>
</dbReference>
<dbReference type="InterPro" id="IPR016050">
    <property type="entry name" value="Proteasome_bsu_CS"/>
</dbReference>
<dbReference type="InterPro" id="IPR001353">
    <property type="entry name" value="Proteasome_sua/b"/>
</dbReference>
<dbReference type="InterPro" id="IPR023333">
    <property type="entry name" value="Proteasome_suB-type"/>
</dbReference>
<dbReference type="PANTHER" id="PTHR32194">
    <property type="entry name" value="METALLOPROTEASE TLDD"/>
    <property type="match status" value="1"/>
</dbReference>
<dbReference type="PANTHER" id="PTHR32194:SF3">
    <property type="entry name" value="PROTEASOME SUBUNIT BETA"/>
    <property type="match status" value="1"/>
</dbReference>
<dbReference type="Pfam" id="PF00227">
    <property type="entry name" value="Proteasome"/>
    <property type="match status" value="1"/>
</dbReference>
<dbReference type="PRINTS" id="PR00141">
    <property type="entry name" value="PROTEASOME"/>
</dbReference>
<dbReference type="SUPFAM" id="SSF56235">
    <property type="entry name" value="N-terminal nucleophile aminohydrolases (Ntn hydrolases)"/>
    <property type="match status" value="1"/>
</dbReference>
<dbReference type="PROSITE" id="PS00854">
    <property type="entry name" value="PROTEASOME_BETA_1"/>
    <property type="match status" value="1"/>
</dbReference>
<dbReference type="PROSITE" id="PS51476">
    <property type="entry name" value="PROTEASOME_BETA_2"/>
    <property type="match status" value="1"/>
</dbReference>
<sequence length="272" mass="29620">MKLDTSGLESTAPIFRRSDFVFDGLQMTPSFDLPNPTDFDGFQKEAVQMVKPAKGTTTLAFIFKHGVMVAADSRASMGGYISSQSVKKIIEINPYMLGTMAGGAADCQFWHRNLGIKCRLHELANKRRISVTGASKLLANILYNYRGMGLSVGTMIAGWDETGPGLYYVDSEGGRLKGMRFSVGSGSPYAYGVLDNGYKYDMTVEEASELARRAIYHATYRDGASGGVVSVYHVGPDGWKKVTGDDVGDLHFQYYPVVPATVEQEMVEVVGA</sequence>
<name>PSB5_SPIOL</name>
<organism>
    <name type="scientific">Spinacia oleracea</name>
    <name type="common">Spinach</name>
    <dbReference type="NCBI Taxonomy" id="3562"/>
    <lineage>
        <taxon>Eukaryota</taxon>
        <taxon>Viridiplantae</taxon>
        <taxon>Streptophyta</taxon>
        <taxon>Embryophyta</taxon>
        <taxon>Tracheophyta</taxon>
        <taxon>Spermatophyta</taxon>
        <taxon>Magnoliopsida</taxon>
        <taxon>eudicotyledons</taxon>
        <taxon>Gunneridae</taxon>
        <taxon>Pentapetalae</taxon>
        <taxon>Caryophyllales</taxon>
        <taxon>Chenopodiaceae</taxon>
        <taxon>Chenopodioideae</taxon>
        <taxon>Anserineae</taxon>
        <taxon>Spinacia</taxon>
    </lineage>
</organism>
<feature type="propeptide" id="PRO_0000026607" description="Removed in mature form" evidence="2">
    <location>
        <begin position="1"/>
        <end position="55"/>
    </location>
</feature>
<feature type="chain" id="PRO_0000026608" description="Proteasome subunit beta type-5">
    <location>
        <begin position="56"/>
        <end position="272"/>
    </location>
</feature>
<feature type="active site" description="Nucleophile" evidence="1">
    <location>
        <position position="56"/>
    </location>
</feature>
<feature type="strand" evidence="4">
    <location>
        <begin position="58"/>
        <end position="63"/>
    </location>
</feature>
<feature type="strand" evidence="4">
    <location>
        <begin position="66"/>
        <end position="71"/>
    </location>
</feature>
<feature type="strand" evidence="4">
    <location>
        <begin position="75"/>
        <end position="77"/>
    </location>
</feature>
<feature type="strand" evidence="4">
    <location>
        <begin position="80"/>
        <end position="84"/>
    </location>
</feature>
<feature type="strand" evidence="4">
    <location>
        <begin position="89"/>
        <end position="93"/>
    </location>
</feature>
<feature type="strand" evidence="4">
    <location>
        <begin position="96"/>
        <end position="99"/>
    </location>
</feature>
<feature type="helix" evidence="4">
    <location>
        <begin position="104"/>
        <end position="125"/>
    </location>
</feature>
<feature type="helix" evidence="4">
    <location>
        <begin position="131"/>
        <end position="144"/>
    </location>
</feature>
<feature type="helix" evidence="4">
    <location>
        <begin position="145"/>
        <end position="148"/>
    </location>
</feature>
<feature type="strand" evidence="4">
    <location>
        <begin position="153"/>
        <end position="160"/>
    </location>
</feature>
<feature type="strand" evidence="4">
    <location>
        <begin position="163"/>
        <end position="170"/>
    </location>
</feature>
<feature type="strand" evidence="4">
    <location>
        <begin position="175"/>
        <end position="177"/>
    </location>
</feature>
<feature type="strand" evidence="4">
    <location>
        <begin position="179"/>
        <end position="184"/>
    </location>
</feature>
<feature type="helix" evidence="4">
    <location>
        <begin position="187"/>
        <end position="197"/>
    </location>
</feature>
<feature type="helix" evidence="4">
    <location>
        <begin position="204"/>
        <end position="221"/>
    </location>
</feature>
<feature type="strand" evidence="4">
    <location>
        <begin position="227"/>
        <end position="234"/>
    </location>
</feature>
<feature type="strand" evidence="4">
    <location>
        <begin position="239"/>
        <end position="246"/>
    </location>
</feature>
<feature type="helix" evidence="4">
    <location>
        <begin position="247"/>
        <end position="254"/>
    </location>
</feature>
<accession>O24361</accession>